<accession>Q8TGJ2</accession>
<accession>D6W1Q1</accession>
<sequence length="30" mass="3367">MPIIGVPRCLENPFCAPAKFPLSVKKKIRI</sequence>
<name>YN075_YEAST</name>
<evidence type="ECO:0000305" key="1"/>
<protein>
    <recommendedName>
        <fullName>Putative UPF0377 protein YNR075C-A</fullName>
    </recommendedName>
</protein>
<comment type="similarity">
    <text evidence="1">Belongs to the UPF0377 family.</text>
</comment>
<keyword id="KW-1185">Reference proteome</keyword>
<organism>
    <name type="scientific">Saccharomyces cerevisiae (strain ATCC 204508 / S288c)</name>
    <name type="common">Baker's yeast</name>
    <dbReference type="NCBI Taxonomy" id="559292"/>
    <lineage>
        <taxon>Eukaryota</taxon>
        <taxon>Fungi</taxon>
        <taxon>Dikarya</taxon>
        <taxon>Ascomycota</taxon>
        <taxon>Saccharomycotina</taxon>
        <taxon>Saccharomycetes</taxon>
        <taxon>Saccharomycetales</taxon>
        <taxon>Saccharomycetaceae</taxon>
        <taxon>Saccharomyces</taxon>
    </lineage>
</organism>
<gene>
    <name type="ordered locus">YNR075C-A</name>
</gene>
<dbReference type="EMBL" id="X86790">
    <property type="status" value="NOT_ANNOTATED_CDS"/>
    <property type="molecule type" value="Genomic_DNA"/>
</dbReference>
<dbReference type="EMBL" id="Z71690">
    <property type="status" value="NOT_ANNOTATED_CDS"/>
    <property type="molecule type" value="Genomic_DNA"/>
</dbReference>
<dbReference type="EMBL" id="Z71691">
    <property type="status" value="NOT_ANNOTATED_CDS"/>
    <property type="molecule type" value="Genomic_DNA"/>
</dbReference>
<dbReference type="EMBL" id="AF480016">
    <property type="protein sequence ID" value="AAL79329.1"/>
    <property type="molecule type" value="Genomic_DNA"/>
</dbReference>
<dbReference type="EMBL" id="BK006947">
    <property type="protein sequence ID" value="DAA10617.1"/>
    <property type="molecule type" value="Genomic_DNA"/>
</dbReference>
<dbReference type="RefSeq" id="NP_878159.3">
    <property type="nucleotide sequence ID" value="NM_001184621.3"/>
</dbReference>
<dbReference type="BioGRID" id="37059">
    <property type="interactions" value="44"/>
</dbReference>
<dbReference type="FunCoup" id="Q8TGJ2">
    <property type="interactions" value="6"/>
</dbReference>
<dbReference type="IntAct" id="Q8TGJ2">
    <property type="interactions" value="3"/>
</dbReference>
<dbReference type="MINT" id="Q8TGJ2"/>
<dbReference type="STRING" id="4932.YNR075C-A"/>
<dbReference type="PaxDb" id="4932-YNR075C-A"/>
<dbReference type="EnsemblFungi" id="YNR075C-A_mRNA">
    <property type="protein sequence ID" value="YNR075C-A"/>
    <property type="gene ID" value="YNR075C-A"/>
</dbReference>
<dbReference type="GeneID" id="1466517"/>
<dbReference type="KEGG" id="sce:YNR075C-A"/>
<dbReference type="AGR" id="SGD:S000028706"/>
<dbReference type="SGD" id="S000028706">
    <property type="gene designation" value="YNR075C-A"/>
</dbReference>
<dbReference type="VEuPathDB" id="FungiDB:YNR075C-A"/>
<dbReference type="HOGENOM" id="CLU_3406606_0_0_1"/>
<dbReference type="InParanoid" id="Q8TGJ2"/>
<dbReference type="BioCyc" id="YEAST:G3O-33412-MONOMER"/>
<dbReference type="PRO" id="PR:Q8TGJ2"/>
<dbReference type="Proteomes" id="UP000002311">
    <property type="component" value="Chromosome XIV"/>
</dbReference>
<proteinExistence type="inferred from homology"/>
<feature type="chain" id="PRO_0000247804" description="Putative UPF0377 protein YNR075C-A">
    <location>
        <begin position="1"/>
        <end position="30"/>
    </location>
</feature>
<reference key="1">
    <citation type="journal article" date="1997" name="Nature">
        <title>The nucleotide sequence of Saccharomyces cerevisiae chromosome XIV and its evolutionary implications.</title>
        <authorList>
            <person name="Philippsen P."/>
            <person name="Kleine K."/>
            <person name="Poehlmann R."/>
            <person name="Duesterhoeft A."/>
            <person name="Hamberg K."/>
            <person name="Hegemann J.H."/>
            <person name="Obermaier B."/>
            <person name="Urrestarazu L.A."/>
            <person name="Aert R."/>
            <person name="Albermann K."/>
            <person name="Altmann R."/>
            <person name="Andre B."/>
            <person name="Baladron V."/>
            <person name="Ballesta J.P.G."/>
            <person name="Becam A.-M."/>
            <person name="Beinhauer J.D."/>
            <person name="Boskovic J."/>
            <person name="Buitrago M.J."/>
            <person name="Bussereau F."/>
            <person name="Coster F."/>
            <person name="Crouzet M."/>
            <person name="D'Angelo M."/>
            <person name="Dal Pero F."/>
            <person name="De Antoni A."/>
            <person name="del Rey F."/>
            <person name="Doignon F."/>
            <person name="Domdey H."/>
            <person name="Dubois E."/>
            <person name="Fiedler T.A."/>
            <person name="Fleig U."/>
            <person name="Floeth M."/>
            <person name="Fritz C."/>
            <person name="Gaillardin C."/>
            <person name="Garcia-Cantalejo J.M."/>
            <person name="Glansdorff N."/>
            <person name="Goffeau A."/>
            <person name="Gueldener U."/>
            <person name="Herbert C.J."/>
            <person name="Heumann K."/>
            <person name="Heuss-Neitzel D."/>
            <person name="Hilbert H."/>
            <person name="Hinni K."/>
            <person name="Iraqui Houssaini I."/>
            <person name="Jacquet M."/>
            <person name="Jimenez A."/>
            <person name="Jonniaux J.-L."/>
            <person name="Karpfinger-Hartl L."/>
            <person name="Lanfranchi G."/>
            <person name="Lepingle A."/>
            <person name="Levesque H."/>
            <person name="Lyck R."/>
            <person name="Maftahi M."/>
            <person name="Mallet L."/>
            <person name="Maurer C.T.C."/>
            <person name="Messenguy F."/>
            <person name="Mewes H.-W."/>
            <person name="Moestl D."/>
            <person name="Nasr F."/>
            <person name="Nicaud J.-M."/>
            <person name="Niedenthal R.K."/>
            <person name="Pandolfo D."/>
            <person name="Pierard A."/>
            <person name="Piravandi E."/>
            <person name="Planta R.J."/>
            <person name="Pohl T.M."/>
            <person name="Purnelle B."/>
            <person name="Rebischung C."/>
            <person name="Remacha M.A."/>
            <person name="Revuelta J.L."/>
            <person name="Rinke M."/>
            <person name="Saiz J.E."/>
            <person name="Sartorello F."/>
            <person name="Scherens B."/>
            <person name="Sen-Gupta M."/>
            <person name="Soler-Mira A."/>
            <person name="Urbanus J.H.M."/>
            <person name="Valle G."/>
            <person name="Van Dyck L."/>
            <person name="Verhasselt P."/>
            <person name="Vierendeels F."/>
            <person name="Vissers S."/>
            <person name="Voet M."/>
            <person name="Volckaert G."/>
            <person name="Wach A."/>
            <person name="Wambutt R."/>
            <person name="Wedler H."/>
            <person name="Zollner A."/>
            <person name="Hani J."/>
        </authorList>
    </citation>
    <scope>NUCLEOTIDE SEQUENCE [LARGE SCALE GENOMIC DNA]</scope>
    <source>
        <strain>ATCC 204508 / S288c</strain>
    </source>
</reference>
<reference key="2">
    <citation type="journal article" date="2014" name="G3 (Bethesda)">
        <title>The reference genome sequence of Saccharomyces cerevisiae: Then and now.</title>
        <authorList>
            <person name="Engel S.R."/>
            <person name="Dietrich F.S."/>
            <person name="Fisk D.G."/>
            <person name="Binkley G."/>
            <person name="Balakrishnan R."/>
            <person name="Costanzo M.C."/>
            <person name="Dwight S.S."/>
            <person name="Hitz B.C."/>
            <person name="Karra K."/>
            <person name="Nash R.S."/>
            <person name="Weng S."/>
            <person name="Wong E.D."/>
            <person name="Lloyd P."/>
            <person name="Skrzypek M.S."/>
            <person name="Miyasato S.R."/>
            <person name="Simison M."/>
            <person name="Cherry J.M."/>
        </authorList>
    </citation>
    <scope>GENOME REANNOTATION</scope>
    <source>
        <strain>ATCC 204508 / S288c</strain>
    </source>
</reference>
<reference key="3">
    <citation type="journal article" date="2002" name="Nat. Biotechnol.">
        <title>An integrated approach for finding overlooked genes in yeast.</title>
        <authorList>
            <person name="Kumar A."/>
            <person name="Harrison P.M."/>
            <person name="Cheung K.-H."/>
            <person name="Lan N."/>
            <person name="Echols N."/>
            <person name="Bertone P."/>
            <person name="Miller P."/>
            <person name="Gerstein M.B."/>
            <person name="Snyder M."/>
        </authorList>
    </citation>
    <scope>NUCLEOTIDE SEQUENCE [GENOMIC DNA]</scope>
</reference>